<accession>Q9TY96</accession>
<comment type="function">
    <text evidence="2">Cysteine protease which plays an essential role in merozoite egress from host erythrocytes. May cleave host SPTB/beta spectrin and ANK1/ankyrin-1 which disrupts host erythrocyte actin cytoskeleton and leads to host erythrocyte cell membrane rupture.</text>
</comment>
<comment type="interaction">
    <interactant intactId="EBI-827996">
        <id>Q9TY96</id>
    </interactant>
    <interactant intactId="EBI-1568896">
        <id>Q8I0V0</id>
        <label>SUB1</label>
    </interactant>
    <organismsDiffer>false</organismsDiffer>
    <experiments>2</experiments>
</comment>
<comment type="subcellular location">
    <subcellularLocation>
        <location evidence="8">Parasitophorous vacuole lumen</location>
    </subcellularLocation>
    <subcellularLocation>
        <location evidence="8">Parasitophorous vacuole membrane</location>
        <topology evidence="9">Peripheral membrane protein</topology>
    </subcellularLocation>
</comment>
<comment type="developmental stage">
    <text evidence="7 8">Expressed during parasite asexual blood stages, specifically at the schizont stage (at protein level).</text>
</comment>
<comment type="PTM">
    <text evidence="7 8">Just prior to merozoite egress from host erythrocytes, proteolytically cleaved by SUB1 to generate the active 75kDa form.</text>
</comment>
<comment type="similarity">
    <text evidence="3">Belongs to the peptidase C1 family.</text>
</comment>
<protein>
    <recommendedName>
        <fullName evidence="9">Serine-repeat antigen protein 6</fullName>
        <ecNumber evidence="2">3.4.22.-</ecNumber>
    </recommendedName>
    <alternativeName>
        <fullName evidence="9">Cysteine protease SERA6</fullName>
    </alternativeName>
</protein>
<organism evidence="12">
    <name type="scientific">Plasmodium falciparum (isolate 3D7)</name>
    <dbReference type="NCBI Taxonomy" id="36329"/>
    <lineage>
        <taxon>Eukaryota</taxon>
        <taxon>Sar</taxon>
        <taxon>Alveolata</taxon>
        <taxon>Apicomplexa</taxon>
        <taxon>Aconoidasida</taxon>
        <taxon>Haemosporida</taxon>
        <taxon>Plasmodiidae</taxon>
        <taxon>Plasmodium</taxon>
        <taxon>Plasmodium (Laverania)</taxon>
    </lineage>
</organism>
<name>SERA6_PLAF7</name>
<keyword id="KW-0325">Glycoprotein</keyword>
<keyword id="KW-0378">Hydrolase</keyword>
<keyword id="KW-0472">Membrane</keyword>
<keyword id="KW-0645">Protease</keyword>
<keyword id="KW-1185">Reference proteome</keyword>
<keyword id="KW-0732">Signal</keyword>
<keyword id="KW-0788">Thiol protease</keyword>
<keyword id="KW-0865">Zymogen</keyword>
<gene>
    <name evidence="9" type="primary">SERA6</name>
    <name evidence="11" type="ORF">PF3D7_0207500</name>
</gene>
<reference evidence="12" key="1">
    <citation type="journal article" date="1998" name="Science">
        <title>Chromosome 2 sequence of the human malaria parasite Plasmodium falciparum.</title>
        <authorList>
            <person name="Gardner M.J."/>
            <person name="Tettelin H."/>
            <person name="Carucci D.J."/>
            <person name="Cummings L.M."/>
            <person name="Aravind L."/>
            <person name="Koonin E.V."/>
            <person name="Shallom S.J."/>
            <person name="Mason T."/>
            <person name="Yu K."/>
            <person name="Fujii C."/>
            <person name="Pederson J."/>
            <person name="Shen K."/>
            <person name="Jing J."/>
            <person name="Aston C."/>
            <person name="Lai Z."/>
            <person name="Schwartz D.C."/>
            <person name="Pertea M."/>
            <person name="Salzberg S.L."/>
            <person name="Zhou L."/>
            <person name="Sutton G.G."/>
            <person name="Clayton R."/>
            <person name="White O."/>
            <person name="Smith H.O."/>
            <person name="Fraser C.M."/>
            <person name="Adams M.D."/>
            <person name="Venter J.C."/>
            <person name="Hoffman S.L."/>
        </authorList>
    </citation>
    <scope>NUCLEOTIDE SEQUENCE [LARGE SCALE GENOMIC DNA]</scope>
    <source>
        <strain evidence="12">3D7</strain>
    </source>
</reference>
<reference evidence="12" key="2">
    <citation type="journal article" date="2002" name="Nature">
        <title>Genome sequence of the human malaria parasite Plasmodium falciparum.</title>
        <authorList>
            <person name="Gardner M.J."/>
            <person name="Hall N."/>
            <person name="Fung E."/>
            <person name="White O."/>
            <person name="Berriman M."/>
            <person name="Hyman R.W."/>
            <person name="Carlton J.M."/>
            <person name="Pain A."/>
            <person name="Nelson K.E."/>
            <person name="Bowman S."/>
            <person name="Paulsen I.T."/>
            <person name="James K.D."/>
            <person name="Eisen J.A."/>
            <person name="Rutherford K.M."/>
            <person name="Salzberg S.L."/>
            <person name="Craig A."/>
            <person name="Kyes S."/>
            <person name="Chan M.-S."/>
            <person name="Nene V."/>
            <person name="Shallom S.J."/>
            <person name="Suh B."/>
            <person name="Peterson J."/>
            <person name="Angiuoli S."/>
            <person name="Pertea M."/>
            <person name="Allen J."/>
            <person name="Selengut J."/>
            <person name="Haft D."/>
            <person name="Mather M.W."/>
            <person name="Vaidya A.B."/>
            <person name="Martin D.M.A."/>
            <person name="Fairlamb A.H."/>
            <person name="Fraunholz M.J."/>
            <person name="Roos D.S."/>
            <person name="Ralph S.A."/>
            <person name="McFadden G.I."/>
            <person name="Cummings L.M."/>
            <person name="Subramanian G.M."/>
            <person name="Mungall C."/>
            <person name="Venter J.C."/>
            <person name="Carucci D.J."/>
            <person name="Hoffman S.L."/>
            <person name="Newbold C."/>
            <person name="Davis R.W."/>
            <person name="Fraser C.M."/>
            <person name="Barrell B.G."/>
        </authorList>
    </citation>
    <scope>NUCLEOTIDE SEQUENCE [LARGE SCALE GENOMIC DNA]</scope>
    <source>
        <strain evidence="12">3D7</strain>
    </source>
</reference>
<reference evidence="9" key="3">
    <citation type="journal article" date="2007" name="Cell">
        <title>Subcellular discharge of a serine protease mediates release of invasive malaria parasites from host erythrocytes.</title>
        <authorList>
            <person name="Yeoh S."/>
            <person name="O'Donnell R.A."/>
            <person name="Koussis K."/>
            <person name="Dluzewski A.R."/>
            <person name="Ansell K.H."/>
            <person name="Osborne S.A."/>
            <person name="Hackett F."/>
            <person name="Withers-Martinez C."/>
            <person name="Mitchell G.H."/>
            <person name="Bannister L.H."/>
            <person name="Bryans J.S."/>
            <person name="Kettleborough C.A."/>
            <person name="Blackman M.J."/>
        </authorList>
    </citation>
    <scope>DEVELOPMENTAL STAGE</scope>
    <scope>PROTEOLYTIC CLEAVAGE</scope>
</reference>
<reference evidence="9" key="4">
    <citation type="journal article" date="2012" name="J. Biol. Chem.">
        <title>Proteolytic activation of the essential parasitophorous vacuole cysteine protease SERA6 accompanies malaria parasite egress from its host erythrocyte.</title>
        <authorList>
            <person name="Ruecker A."/>
            <person name="Shea M."/>
            <person name="Hackett F."/>
            <person name="Suarez C."/>
            <person name="Hirst E.M."/>
            <person name="Milutinovic K."/>
            <person name="Withers-Martinez C."/>
            <person name="Blackman M.J."/>
        </authorList>
    </citation>
    <scope>SUBCELLULAR LOCATION</scope>
    <scope>DEVELOPMENTAL STAGE</scope>
    <scope>PROTEOLYTIC CLEAVAGE</scope>
</reference>
<evidence type="ECO:0000250" key="1">
    <source>
        <dbReference type="UniProtKB" id="O60911"/>
    </source>
</evidence>
<evidence type="ECO:0000250" key="2">
    <source>
        <dbReference type="UniProtKB" id="Q26015"/>
    </source>
</evidence>
<evidence type="ECO:0000255" key="3"/>
<evidence type="ECO:0000255" key="4">
    <source>
        <dbReference type="PROSITE-ProRule" id="PRU00498"/>
    </source>
</evidence>
<evidence type="ECO:0000255" key="5">
    <source>
        <dbReference type="PROSITE-ProRule" id="PRU10088"/>
    </source>
</evidence>
<evidence type="ECO:0000256" key="6">
    <source>
        <dbReference type="SAM" id="MobiDB-lite"/>
    </source>
</evidence>
<evidence type="ECO:0000269" key="7">
    <source>
    </source>
</evidence>
<evidence type="ECO:0000269" key="8">
    <source>
    </source>
</evidence>
<evidence type="ECO:0000305" key="9"/>
<evidence type="ECO:0000305" key="10">
    <source>
    </source>
</evidence>
<evidence type="ECO:0000312" key="11">
    <source>
        <dbReference type="EMBL" id="CZT98088.1"/>
    </source>
</evidence>
<evidence type="ECO:0000312" key="12">
    <source>
        <dbReference type="Proteomes" id="UP000001450"/>
    </source>
</evidence>
<proteinExistence type="evidence at protein level"/>
<dbReference type="EC" id="3.4.22.-" evidence="2"/>
<dbReference type="EMBL" id="LN999943">
    <property type="protein sequence ID" value="CZT98088.1"/>
    <property type="molecule type" value="Genomic_DNA"/>
</dbReference>
<dbReference type="RefSeq" id="XP_001349585.2">
    <property type="nucleotide sequence ID" value="XM_001349549.2"/>
</dbReference>
<dbReference type="SMR" id="Q9TY96"/>
<dbReference type="FunCoup" id="Q9TY96">
    <property type="interactions" value="7"/>
</dbReference>
<dbReference type="IntAct" id="Q9TY96">
    <property type="interactions" value="3"/>
</dbReference>
<dbReference type="STRING" id="36329.Q9TY96"/>
<dbReference type="MEROPS" id="C01.169"/>
<dbReference type="MEROPS" id="C01.A64"/>
<dbReference type="GlyCosmos" id="Q9TY96">
    <property type="glycosylation" value="8 sites, No reported glycans"/>
</dbReference>
<dbReference type="SwissPalm" id="Q9TY96"/>
<dbReference type="PaxDb" id="5833-PFB0335c"/>
<dbReference type="EnsemblProtists" id="CZT98088">
    <property type="protein sequence ID" value="CZT98088"/>
    <property type="gene ID" value="PF3D7_0207500"/>
</dbReference>
<dbReference type="GeneID" id="812667"/>
<dbReference type="KEGG" id="pfa:PF3D7_0207500"/>
<dbReference type="VEuPathDB" id="PlasmoDB:PF3D7_0207500"/>
<dbReference type="HOGENOM" id="CLU_005127_0_0_1"/>
<dbReference type="InParanoid" id="Q9TY96"/>
<dbReference type="OMA" id="NTAICLK"/>
<dbReference type="OrthoDB" id="10253408at2759"/>
<dbReference type="PhylomeDB" id="Q9TY96"/>
<dbReference type="Proteomes" id="UP000001450">
    <property type="component" value="Chromosome 2"/>
</dbReference>
<dbReference type="GO" id="GO:0005615">
    <property type="term" value="C:extracellular space"/>
    <property type="evidence" value="ECO:0000318"/>
    <property type="project" value="GO_Central"/>
</dbReference>
<dbReference type="GO" id="GO:0005764">
    <property type="term" value="C:lysosome"/>
    <property type="evidence" value="ECO:0000318"/>
    <property type="project" value="GO_Central"/>
</dbReference>
<dbReference type="GO" id="GO:0016020">
    <property type="term" value="C:membrane"/>
    <property type="evidence" value="ECO:0007669"/>
    <property type="project" value="UniProtKB-KW"/>
</dbReference>
<dbReference type="GO" id="GO:0020003">
    <property type="term" value="C:symbiont-containing vacuole"/>
    <property type="evidence" value="ECO:0000314"/>
    <property type="project" value="GeneDB"/>
</dbReference>
<dbReference type="GO" id="GO:0020005">
    <property type="term" value="C:symbiont-containing vacuole membrane"/>
    <property type="evidence" value="ECO:0007669"/>
    <property type="project" value="UniProtKB-SubCell"/>
</dbReference>
<dbReference type="GO" id="GO:0004197">
    <property type="term" value="F:cysteine-type endopeptidase activity"/>
    <property type="evidence" value="ECO:0000318"/>
    <property type="project" value="GO_Central"/>
</dbReference>
<dbReference type="GO" id="GO:0008234">
    <property type="term" value="F:cysteine-type peptidase activity"/>
    <property type="evidence" value="ECO:0000250"/>
    <property type="project" value="GeneDB"/>
</dbReference>
<dbReference type="GO" id="GO:0006508">
    <property type="term" value="P:proteolysis"/>
    <property type="evidence" value="ECO:0000250"/>
    <property type="project" value="GeneDB"/>
</dbReference>
<dbReference type="GO" id="GO:0051603">
    <property type="term" value="P:proteolysis involved in protein catabolic process"/>
    <property type="evidence" value="ECO:0000318"/>
    <property type="project" value="GO_Central"/>
</dbReference>
<dbReference type="GO" id="GO:0050776">
    <property type="term" value="P:regulation of immune response"/>
    <property type="evidence" value="ECO:0000304"/>
    <property type="project" value="GeneDB"/>
</dbReference>
<dbReference type="CDD" id="cd02619">
    <property type="entry name" value="Peptidase_C1"/>
    <property type="match status" value="1"/>
</dbReference>
<dbReference type="FunFam" id="3.90.70.10:FF:000036">
    <property type="entry name" value="Serine repeat antigen 5"/>
    <property type="match status" value="1"/>
</dbReference>
<dbReference type="Gene3D" id="3.90.70.10">
    <property type="entry name" value="Cysteine proteinases"/>
    <property type="match status" value="1"/>
</dbReference>
<dbReference type="InterPro" id="IPR038765">
    <property type="entry name" value="Papain-like_cys_pep_sf"/>
</dbReference>
<dbReference type="InterPro" id="IPR000169">
    <property type="entry name" value="Pept_cys_AS"/>
</dbReference>
<dbReference type="InterPro" id="IPR013128">
    <property type="entry name" value="Peptidase_C1A"/>
</dbReference>
<dbReference type="InterPro" id="IPR000668">
    <property type="entry name" value="Peptidase_C1A_C"/>
</dbReference>
<dbReference type="PANTHER" id="PTHR12411">
    <property type="entry name" value="CYSTEINE PROTEASE FAMILY C1-RELATED"/>
    <property type="match status" value="1"/>
</dbReference>
<dbReference type="Pfam" id="PF00112">
    <property type="entry name" value="Peptidase_C1"/>
    <property type="match status" value="1"/>
</dbReference>
<dbReference type="SMART" id="SM00645">
    <property type="entry name" value="Pept_C1"/>
    <property type="match status" value="1"/>
</dbReference>
<dbReference type="SUPFAM" id="SSF54001">
    <property type="entry name" value="Cysteine proteinases"/>
    <property type="match status" value="1"/>
</dbReference>
<dbReference type="PROSITE" id="PS00139">
    <property type="entry name" value="THIOL_PROTEASE_CYS"/>
    <property type="match status" value="1"/>
</dbReference>
<sequence length="1031" mass="118836">MICPIFFLYIINVLFTQYFIKCEGNKVTVISHNNGHNDNLDVNKNGVISQENVFDTSESLNLPSNKKVGSDDLNTTTISFTVPDNLENEVKVVSSSESGKGATVSHTKVTSEGLSDTQPNVTQSVSSSTHTPGSLDSTMSTEQHSSVSQSSLPTESSSETLNKATVPEIPIQINSGLLKNYNGVKVTGSCGSYFRVYLVPHILIYALTKYSVIQLESLFNDNARIDVEHKGELQNKCSEGYHFKLVVYITHNVLNLKWKTYKPNEESKSEDSDVRKYRIPKLERPFTSIQVYTANSKAGVIETKNYNIRTDIPDTCDAIATDCFLNGNVNIEKCFQCTLLVQKKDKSHECFKYVSSEMKKKMNEIKVKAQDDFNPNEYKLIESIDNILSKIYKKANKPFEISKDLINLEDLDYQFKNELLEYCKLLKKVDTSGTLEEYELGNAEDIYNNLTRLLKSHSDENIVTLQGKLRNTAICIKNVDEWILNKRGLTLPSESPSESSSKSDSYLNTFNDKDKNEDKDDMSKNSKEEFKNDDKENSDDQNNNDSNKKDDENNINNGDTNYVYDFDDDDYDNNSYEKDMYESPIKENKNGVIDLEKYGNQIKLKSPYFKNSKYCNYEYCNRWRDKTSCISQIEVEEQGNCGLCWIFASKLHFETIRCMRGYGHFRSSALYVANCSKRKPIDRCEEGSNPLEFLRILDEKKFLPLESNYPYSYTSAGNSCPKLPNSWTNLWGDTKLLFNKKVHRYIGNKGFISHETSYFKNNMDLFIDMVKREVQNKGSVIIYIKTQDVIGYDFNGKGVHSMCGDRTPDHAANIIGYGNYINKKGEKRSYWLIRNSWSYYWGDEGNFRVDMLGPKNCLYNFIHTVVFFKLDLGTIHVPKKKSWKKNVYFLRHNPDFMYSLYYNNYEPETSQDFESENDYDNAFVHGQSNESDETNKEGKNVHNSVEKKIQILHILKHIKDSQIKRGLVKYDNINETKDEHTCSRVNSQDAEKYEECKKFCLTKWNECKDHYSPGYCLTDLYKGEDCNFCYV</sequence>
<feature type="signal peptide" evidence="3">
    <location>
        <begin position="1"/>
        <end position="24"/>
    </location>
</feature>
<feature type="chain" id="PRO_0000450442" description="Serine-repeat antigen protein 6" evidence="3">
    <location>
        <begin position="25"/>
        <end position="1031"/>
    </location>
</feature>
<feature type="region of interest" description="Disordered" evidence="6">
    <location>
        <begin position="91"/>
        <end position="163"/>
    </location>
</feature>
<feature type="region of interest" description="Disordered" evidence="6">
    <location>
        <begin position="490"/>
        <end position="567"/>
    </location>
</feature>
<feature type="compositionally biased region" description="Low complexity" evidence="6">
    <location>
        <begin position="91"/>
        <end position="101"/>
    </location>
</feature>
<feature type="compositionally biased region" description="Polar residues" evidence="6">
    <location>
        <begin position="104"/>
        <end position="139"/>
    </location>
</feature>
<feature type="compositionally biased region" description="Low complexity" evidence="6">
    <location>
        <begin position="140"/>
        <end position="158"/>
    </location>
</feature>
<feature type="compositionally biased region" description="Low complexity" evidence="6">
    <location>
        <begin position="492"/>
        <end position="505"/>
    </location>
</feature>
<feature type="compositionally biased region" description="Basic and acidic residues" evidence="6">
    <location>
        <begin position="511"/>
        <end position="535"/>
    </location>
</feature>
<feature type="compositionally biased region" description="Low complexity" evidence="6">
    <location>
        <begin position="554"/>
        <end position="564"/>
    </location>
</feature>
<feature type="active site" evidence="5">
    <location>
        <position position="644"/>
    </location>
</feature>
<feature type="active site" evidence="1">
    <location>
        <position position="810"/>
    </location>
</feature>
<feature type="active site" evidence="1">
    <location>
        <position position="835"/>
    </location>
</feature>
<feature type="site" description="Cleavage; by SUB1" evidence="2">
    <location>
        <begin position="95"/>
        <end position="96"/>
    </location>
</feature>
<feature type="site" description="Cleavage; by SUB1" evidence="10">
    <location>
        <begin position="370"/>
        <end position="371"/>
    </location>
</feature>
<feature type="site" description="Cleavage; by SUB1" evidence="10">
    <location>
        <begin position="927"/>
        <end position="928"/>
    </location>
</feature>
<feature type="glycosylation site" description="N-linked (GlcNAc...) asparagine" evidence="4">
    <location>
        <position position="74"/>
    </location>
</feature>
<feature type="glycosylation site" description="N-linked (GlcNAc...) asparagine" evidence="4">
    <location>
        <position position="120"/>
    </location>
</feature>
<feature type="glycosylation site" description="N-linked (GlcNAc...) asparagine" evidence="4">
    <location>
        <position position="449"/>
    </location>
</feature>
<feature type="glycosylation site" description="N-linked (GlcNAc...) asparagine" evidence="4">
    <location>
        <position position="544"/>
    </location>
</feature>
<feature type="glycosylation site" description="N-linked (GlcNAc...) asparagine" evidence="4">
    <location>
        <position position="573"/>
    </location>
</feature>
<feature type="glycosylation site" description="N-linked (GlcNAc...) asparagine" evidence="4">
    <location>
        <position position="674"/>
    </location>
</feature>
<feature type="glycosylation site" description="N-linked (GlcNAc...) asparagine" evidence="4">
    <location>
        <position position="929"/>
    </location>
</feature>
<feature type="glycosylation site" description="N-linked (GlcNAc...) asparagine" evidence="4">
    <location>
        <position position="974"/>
    </location>
</feature>